<feature type="chain" id="PRO_1000120761" description="Small ribosomal subunit protein bS6">
    <location>
        <begin position="1"/>
        <end position="142"/>
    </location>
</feature>
<feature type="region of interest" description="Disordered" evidence="2">
    <location>
        <begin position="110"/>
        <end position="142"/>
    </location>
</feature>
<comment type="function">
    <text evidence="1">Binds together with bS18 to 16S ribosomal RNA.</text>
</comment>
<comment type="similarity">
    <text evidence="1">Belongs to the bacterial ribosomal protein bS6 family.</text>
</comment>
<proteinExistence type="inferred from homology"/>
<gene>
    <name evidence="1" type="primary">rpsF</name>
    <name type="ordered locus">HPG27_1191</name>
</gene>
<dbReference type="EMBL" id="CP001173">
    <property type="protein sequence ID" value="ACI27941.1"/>
    <property type="molecule type" value="Genomic_DNA"/>
</dbReference>
<dbReference type="RefSeq" id="WP_001216690.1">
    <property type="nucleotide sequence ID" value="NC_011333.1"/>
</dbReference>
<dbReference type="SMR" id="B5Z8P2"/>
<dbReference type="KEGG" id="hpg:HPG27_1191"/>
<dbReference type="HOGENOM" id="CLU_113441_4_1_7"/>
<dbReference type="Proteomes" id="UP000001735">
    <property type="component" value="Chromosome"/>
</dbReference>
<dbReference type="GO" id="GO:0022627">
    <property type="term" value="C:cytosolic small ribosomal subunit"/>
    <property type="evidence" value="ECO:0007669"/>
    <property type="project" value="TreeGrafter"/>
</dbReference>
<dbReference type="GO" id="GO:0070181">
    <property type="term" value="F:small ribosomal subunit rRNA binding"/>
    <property type="evidence" value="ECO:0007669"/>
    <property type="project" value="TreeGrafter"/>
</dbReference>
<dbReference type="GO" id="GO:0003735">
    <property type="term" value="F:structural constituent of ribosome"/>
    <property type="evidence" value="ECO:0007669"/>
    <property type="project" value="InterPro"/>
</dbReference>
<dbReference type="GO" id="GO:0006412">
    <property type="term" value="P:translation"/>
    <property type="evidence" value="ECO:0007669"/>
    <property type="project" value="UniProtKB-UniRule"/>
</dbReference>
<dbReference type="CDD" id="cd00473">
    <property type="entry name" value="bS6"/>
    <property type="match status" value="1"/>
</dbReference>
<dbReference type="FunFam" id="3.30.70.60:FF:000010">
    <property type="entry name" value="30S ribosomal protein S6"/>
    <property type="match status" value="1"/>
</dbReference>
<dbReference type="Gene3D" id="3.30.70.60">
    <property type="match status" value="1"/>
</dbReference>
<dbReference type="HAMAP" id="MF_00360">
    <property type="entry name" value="Ribosomal_bS6"/>
    <property type="match status" value="1"/>
</dbReference>
<dbReference type="InterPro" id="IPR000529">
    <property type="entry name" value="Ribosomal_bS6"/>
</dbReference>
<dbReference type="InterPro" id="IPR020815">
    <property type="entry name" value="Ribosomal_bS6_CS"/>
</dbReference>
<dbReference type="InterPro" id="IPR035980">
    <property type="entry name" value="Ribosomal_bS6_sf"/>
</dbReference>
<dbReference type="InterPro" id="IPR020814">
    <property type="entry name" value="Ribosomal_S6_plastid/chlpt"/>
</dbReference>
<dbReference type="InterPro" id="IPR014717">
    <property type="entry name" value="Transl_elong_EF1B/ribsomal_bS6"/>
</dbReference>
<dbReference type="NCBIfam" id="TIGR00166">
    <property type="entry name" value="S6"/>
    <property type="match status" value="1"/>
</dbReference>
<dbReference type="PANTHER" id="PTHR21011">
    <property type="entry name" value="MITOCHONDRIAL 28S RIBOSOMAL PROTEIN S6"/>
    <property type="match status" value="1"/>
</dbReference>
<dbReference type="PANTHER" id="PTHR21011:SF1">
    <property type="entry name" value="SMALL RIBOSOMAL SUBUNIT PROTEIN BS6M"/>
    <property type="match status" value="1"/>
</dbReference>
<dbReference type="Pfam" id="PF01250">
    <property type="entry name" value="Ribosomal_S6"/>
    <property type="match status" value="1"/>
</dbReference>
<dbReference type="SUPFAM" id="SSF54995">
    <property type="entry name" value="Ribosomal protein S6"/>
    <property type="match status" value="1"/>
</dbReference>
<dbReference type="PROSITE" id="PS01048">
    <property type="entry name" value="RIBOSOMAL_S6"/>
    <property type="match status" value="1"/>
</dbReference>
<reference key="1">
    <citation type="journal article" date="2009" name="J. Bacteriol.">
        <title>The complete genome sequence of Helicobacter pylori strain G27.</title>
        <authorList>
            <person name="Baltrus D.A."/>
            <person name="Amieva M.R."/>
            <person name="Covacci A."/>
            <person name="Lowe T.M."/>
            <person name="Merrell D.S."/>
            <person name="Ottemann K.M."/>
            <person name="Stein M."/>
            <person name="Salama N.R."/>
            <person name="Guillemin K."/>
        </authorList>
    </citation>
    <scope>NUCLEOTIDE SEQUENCE [LARGE SCALE GENOMIC DNA]</scope>
    <source>
        <strain>G27</strain>
    </source>
</reference>
<organism>
    <name type="scientific">Helicobacter pylori (strain G27)</name>
    <dbReference type="NCBI Taxonomy" id="563041"/>
    <lineage>
        <taxon>Bacteria</taxon>
        <taxon>Pseudomonadati</taxon>
        <taxon>Campylobacterota</taxon>
        <taxon>Epsilonproteobacteria</taxon>
        <taxon>Campylobacterales</taxon>
        <taxon>Helicobacteraceae</taxon>
        <taxon>Helicobacter</taxon>
    </lineage>
</organism>
<evidence type="ECO:0000255" key="1">
    <source>
        <dbReference type="HAMAP-Rule" id="MF_00360"/>
    </source>
</evidence>
<evidence type="ECO:0000256" key="2">
    <source>
        <dbReference type="SAM" id="MobiDB-lite"/>
    </source>
</evidence>
<evidence type="ECO:0000305" key="3"/>
<sequence>MRHYETMFILKPTLVEEEIKSKIEFYKEVITKHHGVIETSLDMGMRNLAYEIKKHKRGYYYVAYFKAEPSMILELERLYRINEDVLRFIVIKYESKKEVEAWHALVDRANKKPSHAKEKHEKTEHAHSHHAEEAKSTESHSE</sequence>
<protein>
    <recommendedName>
        <fullName evidence="1">Small ribosomal subunit protein bS6</fullName>
    </recommendedName>
    <alternativeName>
        <fullName evidence="3">30S ribosomal protein S6</fullName>
    </alternativeName>
</protein>
<keyword id="KW-1185">Reference proteome</keyword>
<keyword id="KW-0687">Ribonucleoprotein</keyword>
<keyword id="KW-0689">Ribosomal protein</keyword>
<keyword id="KW-0694">RNA-binding</keyword>
<keyword id="KW-0699">rRNA-binding</keyword>
<accession>B5Z8P2</accession>
<name>RS6_HELPG</name>